<accession>Q9Y0A7</accession>
<accession>Q0IGQ5</accession>
<accession>Q9VJ76</accession>
<name>AMOS_DROME</name>
<proteinExistence type="evidence at protein level"/>
<sequence>MLTNNELMEQFYFPDEAPAIPEFLSNDTFQQLEQLMYQQEFSTSDSQSDGANSCSLEMYYDTPSVLELEHMLNAQEQQQHHLQANPLGKNQGRSPRYWNKQQRSKPYDKLSTSMSSSTSSASSSSSSSAGFGGEVLKKRRLAANARERRRMNSLNDAFDKLRDVVPSLGHDRRLSKYETLQMAQAYIGDLVTLLSRDY</sequence>
<comment type="function">
    <text evidence="3 4">Transcription factor involved in early neurogenesis; sensillum basiconica formation and maybe sensillum trichodea development. Promotes multiple dendritic (MD) neuron formation. Required for olfactory sensilla; regulated by lozenge (lz).</text>
</comment>
<comment type="subunit">
    <text evidence="3">Efficient DNA binding requires dimerization with another bHLH protein. Interacts with Daughterless (da).</text>
</comment>
<comment type="subcellular location">
    <subcellularLocation>
        <location evidence="5">Nucleus</location>
    </subcellularLocation>
</comment>
<comment type="tissue specificity">
    <text evidence="3 4">During embryonic development, expression is seen in a small cluster of ectodermal cells during stage 10 which becomes restricted to 1 cell by stage 11. Expression is lost from this cell in the thorax and then the abdomen. Later expression is restricted to sensory organ precursors. Very transient expression was detected in distal leg disks at approximately 0-4 hours after puparium formation (APF), correlating with the anlage of the innervated tarsal claw.</text>
</comment>
<dbReference type="EMBL" id="AF166113">
    <property type="protein sequence ID" value="AAD45410.1"/>
    <property type="molecule type" value="mRNA"/>
</dbReference>
<dbReference type="EMBL" id="AE014134">
    <property type="protein sequence ID" value="AAF53678.1"/>
    <property type="molecule type" value="Genomic_DNA"/>
</dbReference>
<dbReference type="EMBL" id="BT028832">
    <property type="protein sequence ID" value="ABI34213.2"/>
    <property type="molecule type" value="mRNA"/>
</dbReference>
<dbReference type="EMBL" id="BT028865">
    <property type="protein sequence ID" value="ABI34246.2"/>
    <property type="molecule type" value="mRNA"/>
</dbReference>
<dbReference type="RefSeq" id="NP_477446.1">
    <property type="nucleotide sequence ID" value="NM_058098.3"/>
</dbReference>
<dbReference type="SMR" id="Q9Y0A7"/>
<dbReference type="BioGRID" id="61105">
    <property type="interactions" value="21"/>
</dbReference>
<dbReference type="DIP" id="DIP-18188N"/>
<dbReference type="FunCoup" id="Q9Y0A7">
    <property type="interactions" value="16"/>
</dbReference>
<dbReference type="IntAct" id="Q9Y0A7">
    <property type="interactions" value="4"/>
</dbReference>
<dbReference type="STRING" id="7227.FBpp0080631"/>
<dbReference type="PaxDb" id="7227-FBpp0080631"/>
<dbReference type="DNASU" id="35110"/>
<dbReference type="EnsemblMetazoa" id="FBtr0081081">
    <property type="protein sequence ID" value="FBpp0080631"/>
    <property type="gene ID" value="FBgn0003270"/>
</dbReference>
<dbReference type="GeneID" id="35110"/>
<dbReference type="KEGG" id="dme:Dmel_CG10393"/>
<dbReference type="AGR" id="FB:FBgn0003270"/>
<dbReference type="CTD" id="35110"/>
<dbReference type="FlyBase" id="FBgn0003270">
    <property type="gene designation" value="amos"/>
</dbReference>
<dbReference type="VEuPathDB" id="VectorBase:FBgn0003270"/>
<dbReference type="eggNOG" id="KOG4395">
    <property type="taxonomic scope" value="Eukaryota"/>
</dbReference>
<dbReference type="GeneTree" id="ENSGT00940000168200"/>
<dbReference type="HOGENOM" id="CLU_1379447_0_0_1"/>
<dbReference type="InParanoid" id="Q9Y0A7"/>
<dbReference type="OMA" id="SLGHDRR"/>
<dbReference type="OrthoDB" id="6161578at2759"/>
<dbReference type="PhylomeDB" id="Q9Y0A7"/>
<dbReference type="SignaLink" id="Q9Y0A7"/>
<dbReference type="BioGRID-ORCS" id="35110">
    <property type="hits" value="0 hits in 3 CRISPR screens"/>
</dbReference>
<dbReference type="GenomeRNAi" id="35110"/>
<dbReference type="PRO" id="PR:Q9Y0A7"/>
<dbReference type="Proteomes" id="UP000000803">
    <property type="component" value="Chromosome 2L"/>
</dbReference>
<dbReference type="Bgee" id="FBgn0003270">
    <property type="expression patterns" value="Expressed in antennal primordium (Drosophila) and 19 other cell types or tissues"/>
</dbReference>
<dbReference type="GO" id="GO:0005634">
    <property type="term" value="C:nucleus"/>
    <property type="evidence" value="ECO:0000318"/>
    <property type="project" value="GO_Central"/>
</dbReference>
<dbReference type="GO" id="GO:0000981">
    <property type="term" value="F:DNA-binding transcription factor activity, RNA polymerase II-specific"/>
    <property type="evidence" value="ECO:0000318"/>
    <property type="project" value="GO_Central"/>
</dbReference>
<dbReference type="GO" id="GO:0070888">
    <property type="term" value="F:E-box binding"/>
    <property type="evidence" value="ECO:0000318"/>
    <property type="project" value="GO_Central"/>
</dbReference>
<dbReference type="GO" id="GO:0046982">
    <property type="term" value="F:protein heterodimerization activity"/>
    <property type="evidence" value="ECO:0000353"/>
    <property type="project" value="FlyBase"/>
</dbReference>
<dbReference type="GO" id="GO:0061564">
    <property type="term" value="P:axon development"/>
    <property type="evidence" value="ECO:0000318"/>
    <property type="project" value="GO_Central"/>
</dbReference>
<dbReference type="GO" id="GO:0048813">
    <property type="term" value="P:dendrite morphogenesis"/>
    <property type="evidence" value="ECO:0000315"/>
    <property type="project" value="FlyBase"/>
</dbReference>
<dbReference type="GO" id="GO:0048663">
    <property type="term" value="P:neuron fate commitment"/>
    <property type="evidence" value="ECO:0000318"/>
    <property type="project" value="GO_Central"/>
</dbReference>
<dbReference type="GO" id="GO:0045944">
    <property type="term" value="P:positive regulation of transcription by RNA polymerase II"/>
    <property type="evidence" value="ECO:0000318"/>
    <property type="project" value="GO_Central"/>
</dbReference>
<dbReference type="GO" id="GO:0008052">
    <property type="term" value="P:sensory organ boundary specification"/>
    <property type="evidence" value="ECO:0000315"/>
    <property type="project" value="FlyBase"/>
</dbReference>
<dbReference type="GO" id="GO:0007423">
    <property type="term" value="P:sensory organ development"/>
    <property type="evidence" value="ECO:0000315"/>
    <property type="project" value="FlyBase"/>
</dbReference>
<dbReference type="GO" id="GO:0016360">
    <property type="term" value="P:sensory organ precursor cell fate determination"/>
    <property type="evidence" value="ECO:0000314"/>
    <property type="project" value="FlyBase"/>
</dbReference>
<dbReference type="CDD" id="cd19715">
    <property type="entry name" value="bHLH_TS_amos_like"/>
    <property type="match status" value="1"/>
</dbReference>
<dbReference type="FunFam" id="4.10.280.10:FF:000025">
    <property type="entry name" value="protein atonal homolog 7"/>
    <property type="match status" value="1"/>
</dbReference>
<dbReference type="Gene3D" id="4.10.280.10">
    <property type="entry name" value="Helix-loop-helix DNA-binding domain"/>
    <property type="match status" value="1"/>
</dbReference>
<dbReference type="InterPro" id="IPR011598">
    <property type="entry name" value="bHLH_dom"/>
</dbReference>
<dbReference type="InterPro" id="IPR050359">
    <property type="entry name" value="bHLH_transcription_factors"/>
</dbReference>
<dbReference type="InterPro" id="IPR036638">
    <property type="entry name" value="HLH_DNA-bd_sf"/>
</dbReference>
<dbReference type="PANTHER" id="PTHR19290">
    <property type="entry name" value="BASIC HELIX-LOOP-HELIX PROTEIN NEUROGENIN-RELATED"/>
    <property type="match status" value="1"/>
</dbReference>
<dbReference type="PANTHER" id="PTHR19290:SF162">
    <property type="entry name" value="TRANSCRIPTION FACTOR ATOH7"/>
    <property type="match status" value="1"/>
</dbReference>
<dbReference type="Pfam" id="PF00010">
    <property type="entry name" value="HLH"/>
    <property type="match status" value="1"/>
</dbReference>
<dbReference type="SMART" id="SM00353">
    <property type="entry name" value="HLH"/>
    <property type="match status" value="1"/>
</dbReference>
<dbReference type="SUPFAM" id="SSF47459">
    <property type="entry name" value="HLH, helix-loop-helix DNA-binding domain"/>
    <property type="match status" value="1"/>
</dbReference>
<dbReference type="PROSITE" id="PS50888">
    <property type="entry name" value="BHLH"/>
    <property type="match status" value="1"/>
</dbReference>
<gene>
    <name type="primary">amos</name>
    <name type="synonym">Roi</name>
    <name type="synonym">rolo</name>
    <name type="ORF">CG10393</name>
</gene>
<evidence type="ECO:0000255" key="1">
    <source>
        <dbReference type="PROSITE-ProRule" id="PRU00981"/>
    </source>
</evidence>
<evidence type="ECO:0000256" key="2">
    <source>
        <dbReference type="SAM" id="MobiDB-lite"/>
    </source>
</evidence>
<evidence type="ECO:0000269" key="3">
    <source>
    </source>
</evidence>
<evidence type="ECO:0000269" key="4">
    <source>
    </source>
</evidence>
<evidence type="ECO:0000305" key="5"/>
<reference key="1">
    <citation type="journal article" date="2000" name="Neuron">
        <title>Amos, a proneural gene for Drosophila olfactory sense organs that is regulated by lozenge.</title>
        <authorList>
            <person name="Goulding S.E."/>
            <person name="zur Lage P."/>
            <person name="Jarman A.P."/>
        </authorList>
    </citation>
    <scope>NUCLEOTIDE SEQUENCE [MRNA]</scope>
    <scope>FUNCTION</scope>
    <scope>TISSUE SPECIFICITY</scope>
    <source>
        <strain>Oregon-R</strain>
    </source>
</reference>
<reference key="2">
    <citation type="journal article" date="2000" name="Science">
        <title>The genome sequence of Drosophila melanogaster.</title>
        <authorList>
            <person name="Adams M.D."/>
            <person name="Celniker S.E."/>
            <person name="Holt R.A."/>
            <person name="Evans C.A."/>
            <person name="Gocayne J.D."/>
            <person name="Amanatides P.G."/>
            <person name="Scherer S.E."/>
            <person name="Li P.W."/>
            <person name="Hoskins R.A."/>
            <person name="Galle R.F."/>
            <person name="George R.A."/>
            <person name="Lewis S.E."/>
            <person name="Richards S."/>
            <person name="Ashburner M."/>
            <person name="Henderson S.N."/>
            <person name="Sutton G.G."/>
            <person name="Wortman J.R."/>
            <person name="Yandell M.D."/>
            <person name="Zhang Q."/>
            <person name="Chen L.X."/>
            <person name="Brandon R.C."/>
            <person name="Rogers Y.-H.C."/>
            <person name="Blazej R.G."/>
            <person name="Champe M."/>
            <person name="Pfeiffer B.D."/>
            <person name="Wan K.H."/>
            <person name="Doyle C."/>
            <person name="Baxter E.G."/>
            <person name="Helt G."/>
            <person name="Nelson C.R."/>
            <person name="Miklos G.L.G."/>
            <person name="Abril J.F."/>
            <person name="Agbayani A."/>
            <person name="An H.-J."/>
            <person name="Andrews-Pfannkoch C."/>
            <person name="Baldwin D."/>
            <person name="Ballew R.M."/>
            <person name="Basu A."/>
            <person name="Baxendale J."/>
            <person name="Bayraktaroglu L."/>
            <person name="Beasley E.M."/>
            <person name="Beeson K.Y."/>
            <person name="Benos P.V."/>
            <person name="Berman B.P."/>
            <person name="Bhandari D."/>
            <person name="Bolshakov S."/>
            <person name="Borkova D."/>
            <person name="Botchan M.R."/>
            <person name="Bouck J."/>
            <person name="Brokstein P."/>
            <person name="Brottier P."/>
            <person name="Burtis K.C."/>
            <person name="Busam D.A."/>
            <person name="Butler H."/>
            <person name="Cadieu E."/>
            <person name="Center A."/>
            <person name="Chandra I."/>
            <person name="Cherry J.M."/>
            <person name="Cawley S."/>
            <person name="Dahlke C."/>
            <person name="Davenport L.B."/>
            <person name="Davies P."/>
            <person name="de Pablos B."/>
            <person name="Delcher A."/>
            <person name="Deng Z."/>
            <person name="Mays A.D."/>
            <person name="Dew I."/>
            <person name="Dietz S.M."/>
            <person name="Dodson K."/>
            <person name="Doup L.E."/>
            <person name="Downes M."/>
            <person name="Dugan-Rocha S."/>
            <person name="Dunkov B.C."/>
            <person name="Dunn P."/>
            <person name="Durbin K.J."/>
            <person name="Evangelista C.C."/>
            <person name="Ferraz C."/>
            <person name="Ferriera S."/>
            <person name="Fleischmann W."/>
            <person name="Fosler C."/>
            <person name="Gabrielian A.E."/>
            <person name="Garg N.S."/>
            <person name="Gelbart W.M."/>
            <person name="Glasser K."/>
            <person name="Glodek A."/>
            <person name="Gong F."/>
            <person name="Gorrell J.H."/>
            <person name="Gu Z."/>
            <person name="Guan P."/>
            <person name="Harris M."/>
            <person name="Harris N.L."/>
            <person name="Harvey D.A."/>
            <person name="Heiman T.J."/>
            <person name="Hernandez J.R."/>
            <person name="Houck J."/>
            <person name="Hostin D."/>
            <person name="Houston K.A."/>
            <person name="Howland T.J."/>
            <person name="Wei M.-H."/>
            <person name="Ibegwam C."/>
            <person name="Jalali M."/>
            <person name="Kalush F."/>
            <person name="Karpen G.H."/>
            <person name="Ke Z."/>
            <person name="Kennison J.A."/>
            <person name="Ketchum K.A."/>
            <person name="Kimmel B.E."/>
            <person name="Kodira C.D."/>
            <person name="Kraft C.L."/>
            <person name="Kravitz S."/>
            <person name="Kulp D."/>
            <person name="Lai Z."/>
            <person name="Lasko P."/>
            <person name="Lei Y."/>
            <person name="Levitsky A.A."/>
            <person name="Li J.H."/>
            <person name="Li Z."/>
            <person name="Liang Y."/>
            <person name="Lin X."/>
            <person name="Liu X."/>
            <person name="Mattei B."/>
            <person name="McIntosh T.C."/>
            <person name="McLeod M.P."/>
            <person name="McPherson D."/>
            <person name="Merkulov G."/>
            <person name="Milshina N.V."/>
            <person name="Mobarry C."/>
            <person name="Morris J."/>
            <person name="Moshrefi A."/>
            <person name="Mount S.M."/>
            <person name="Moy M."/>
            <person name="Murphy B."/>
            <person name="Murphy L."/>
            <person name="Muzny D.M."/>
            <person name="Nelson D.L."/>
            <person name="Nelson D.R."/>
            <person name="Nelson K.A."/>
            <person name="Nixon K."/>
            <person name="Nusskern D.R."/>
            <person name="Pacleb J.M."/>
            <person name="Palazzolo M."/>
            <person name="Pittman G.S."/>
            <person name="Pan S."/>
            <person name="Pollard J."/>
            <person name="Puri V."/>
            <person name="Reese M.G."/>
            <person name="Reinert K."/>
            <person name="Remington K."/>
            <person name="Saunders R.D.C."/>
            <person name="Scheeler F."/>
            <person name="Shen H."/>
            <person name="Shue B.C."/>
            <person name="Siden-Kiamos I."/>
            <person name="Simpson M."/>
            <person name="Skupski M.P."/>
            <person name="Smith T.J."/>
            <person name="Spier E."/>
            <person name="Spradling A.C."/>
            <person name="Stapleton M."/>
            <person name="Strong R."/>
            <person name="Sun E."/>
            <person name="Svirskas R."/>
            <person name="Tector C."/>
            <person name="Turner R."/>
            <person name="Venter E."/>
            <person name="Wang A.H."/>
            <person name="Wang X."/>
            <person name="Wang Z.-Y."/>
            <person name="Wassarman D.A."/>
            <person name="Weinstock G.M."/>
            <person name="Weissenbach J."/>
            <person name="Williams S.M."/>
            <person name="Woodage T."/>
            <person name="Worley K.C."/>
            <person name="Wu D."/>
            <person name="Yang S."/>
            <person name="Yao Q.A."/>
            <person name="Ye J."/>
            <person name="Yeh R.-F."/>
            <person name="Zaveri J.S."/>
            <person name="Zhan M."/>
            <person name="Zhang G."/>
            <person name="Zhao Q."/>
            <person name="Zheng L."/>
            <person name="Zheng X.H."/>
            <person name="Zhong F.N."/>
            <person name="Zhong W."/>
            <person name="Zhou X."/>
            <person name="Zhu S.C."/>
            <person name="Zhu X."/>
            <person name="Smith H.O."/>
            <person name="Gibbs R.A."/>
            <person name="Myers E.W."/>
            <person name="Rubin G.M."/>
            <person name="Venter J.C."/>
        </authorList>
    </citation>
    <scope>NUCLEOTIDE SEQUENCE [LARGE SCALE GENOMIC DNA]</scope>
    <source>
        <strain>Berkeley</strain>
    </source>
</reference>
<reference key="3">
    <citation type="journal article" date="2002" name="Genome Biol.">
        <title>Annotation of the Drosophila melanogaster euchromatic genome: a systematic review.</title>
        <authorList>
            <person name="Misra S."/>
            <person name="Crosby M.A."/>
            <person name="Mungall C.J."/>
            <person name="Matthews B.B."/>
            <person name="Campbell K.S."/>
            <person name="Hradecky P."/>
            <person name="Huang Y."/>
            <person name="Kaminker J.S."/>
            <person name="Millburn G.H."/>
            <person name="Prochnik S.E."/>
            <person name="Smith C.D."/>
            <person name="Tupy J.L."/>
            <person name="Whitfield E.J."/>
            <person name="Bayraktaroglu L."/>
            <person name="Berman B.P."/>
            <person name="Bettencourt B.R."/>
            <person name="Celniker S.E."/>
            <person name="de Grey A.D.N.J."/>
            <person name="Drysdale R.A."/>
            <person name="Harris N.L."/>
            <person name="Richter J."/>
            <person name="Russo S."/>
            <person name="Schroeder A.J."/>
            <person name="Shu S.Q."/>
            <person name="Stapleton M."/>
            <person name="Yamada C."/>
            <person name="Ashburner M."/>
            <person name="Gelbart W.M."/>
            <person name="Rubin G.M."/>
            <person name="Lewis S.E."/>
        </authorList>
    </citation>
    <scope>GENOME REANNOTATION</scope>
    <source>
        <strain>Berkeley</strain>
    </source>
</reference>
<reference key="4">
    <citation type="submission" date="2006-10" db="EMBL/GenBank/DDBJ databases">
        <authorList>
            <person name="Stapleton M."/>
            <person name="Carlson J.W."/>
            <person name="Frise E."/>
            <person name="Kapadia B."/>
            <person name="Park S."/>
            <person name="Wan K.H."/>
            <person name="Yu C."/>
            <person name="Celniker S.E."/>
        </authorList>
    </citation>
    <scope>NUCLEOTIDE SEQUENCE [LARGE SCALE MRNA]</scope>
    <source>
        <strain>Berkeley</strain>
        <tissue>Larva</tissue>
        <tissue>Pupae</tissue>
    </source>
</reference>
<reference key="5">
    <citation type="journal article" date="2000" name="Neuron">
        <title>The proneural gene amos promotes multiple dendritic neuron formation in the Drosophila peripheral nervous system.</title>
        <authorList>
            <person name="Huang M.L."/>
            <person name="Hsu C.H."/>
            <person name="Chien C.T."/>
        </authorList>
    </citation>
    <scope>FUNCTION</scope>
    <scope>INTERACTION WITH DA</scope>
    <scope>TISSUE SPECIFICITY</scope>
</reference>
<keyword id="KW-0217">Developmental protein</keyword>
<keyword id="KW-0221">Differentiation</keyword>
<keyword id="KW-0524">Neurogenesis</keyword>
<keyword id="KW-0539">Nucleus</keyword>
<keyword id="KW-1185">Reference proteome</keyword>
<keyword id="KW-0804">Transcription</keyword>
<keyword id="KW-0805">Transcription regulation</keyword>
<feature type="chain" id="PRO_0000127432" description="Basic helix-loop-helix transcription factor amos">
    <location>
        <begin position="1"/>
        <end position="198"/>
    </location>
</feature>
<feature type="domain" description="bHLH" evidence="1">
    <location>
        <begin position="138"/>
        <end position="190"/>
    </location>
</feature>
<feature type="region of interest" description="Disordered" evidence="2">
    <location>
        <begin position="76"/>
        <end position="131"/>
    </location>
</feature>
<feature type="compositionally biased region" description="Low complexity" evidence="2">
    <location>
        <begin position="111"/>
        <end position="129"/>
    </location>
</feature>
<feature type="sequence conflict" description="In Ref. 1; AAD45410." evidence="5" ref="1">
    <original>S</original>
    <variation>G</variation>
    <location>
        <position position="25"/>
    </location>
</feature>
<protein>
    <recommendedName>
        <fullName>Basic helix-loop-helix transcription factor amos</fullName>
    </recommendedName>
    <alternativeName>
        <fullName>Absent MD neurons and olfactory sensilla protein</fullName>
        <shortName>Amos protein</shortName>
    </alternativeName>
    <alternativeName>
        <fullName>Reduced olfactory organs protein</fullName>
    </alternativeName>
    <alternativeName>
        <fullName>Rough eye protein</fullName>
    </alternativeName>
</protein>
<organism>
    <name type="scientific">Drosophila melanogaster</name>
    <name type="common">Fruit fly</name>
    <dbReference type="NCBI Taxonomy" id="7227"/>
    <lineage>
        <taxon>Eukaryota</taxon>
        <taxon>Metazoa</taxon>
        <taxon>Ecdysozoa</taxon>
        <taxon>Arthropoda</taxon>
        <taxon>Hexapoda</taxon>
        <taxon>Insecta</taxon>
        <taxon>Pterygota</taxon>
        <taxon>Neoptera</taxon>
        <taxon>Endopterygota</taxon>
        <taxon>Diptera</taxon>
        <taxon>Brachycera</taxon>
        <taxon>Muscomorpha</taxon>
        <taxon>Ephydroidea</taxon>
        <taxon>Drosophilidae</taxon>
        <taxon>Drosophila</taxon>
        <taxon>Sophophora</taxon>
    </lineage>
</organism>